<keyword id="KW-0143">Chaperone</keyword>
<keyword id="KW-0963">Cytoplasm</keyword>
<feature type="chain" id="PRO_1000025260" description="Co-chaperonin GroES">
    <location>
        <begin position="1"/>
        <end position="95"/>
    </location>
</feature>
<comment type="function">
    <text evidence="1">Together with the chaperonin GroEL, plays an essential role in assisting protein folding. The GroEL-GroES system forms a nano-cage that allows encapsulation of the non-native substrate proteins and provides a physical environment optimized to promote and accelerate protein folding. GroES binds to the apical surface of the GroEL ring, thereby capping the opening of the GroEL channel.</text>
</comment>
<comment type="subunit">
    <text evidence="1">Heptamer of 7 subunits arranged in a ring. Interacts with the chaperonin GroEL.</text>
</comment>
<comment type="subcellular location">
    <subcellularLocation>
        <location evidence="1">Cytoplasm</location>
    </subcellularLocation>
</comment>
<comment type="similarity">
    <text evidence="1">Belongs to the GroES chaperonin family.</text>
</comment>
<proteinExistence type="inferred from homology"/>
<name>CH10_FRATF</name>
<sequence length="95" mass="10272">MNIRPLQDRVLVRRAEEEKKSAGGIILTGNAQEKPSQGEVVAVGNGKKLDNGTTLPMDVKVGDKVLFGKYSGSEVKVGDETLLMMREEDIMGIIA</sequence>
<protein>
    <recommendedName>
        <fullName evidence="1">Co-chaperonin GroES</fullName>
    </recommendedName>
    <alternativeName>
        <fullName evidence="1">10 kDa chaperonin</fullName>
    </alternativeName>
    <alternativeName>
        <fullName evidence="1">Chaperonin-10</fullName>
        <shortName evidence="1">Cpn10</shortName>
    </alternativeName>
</protein>
<dbReference type="EMBL" id="CP000803">
    <property type="protein sequence ID" value="ABU62292.1"/>
    <property type="molecule type" value="Genomic_DNA"/>
</dbReference>
<dbReference type="RefSeq" id="WP_003017172.1">
    <property type="nucleotide sequence ID" value="NC_009749.1"/>
</dbReference>
<dbReference type="SMR" id="A7NE89"/>
<dbReference type="KEGG" id="fta:FTA_1817"/>
<dbReference type="HOGENOM" id="CLU_132825_2_0_6"/>
<dbReference type="GO" id="GO:0005737">
    <property type="term" value="C:cytoplasm"/>
    <property type="evidence" value="ECO:0007669"/>
    <property type="project" value="UniProtKB-SubCell"/>
</dbReference>
<dbReference type="GO" id="GO:0005524">
    <property type="term" value="F:ATP binding"/>
    <property type="evidence" value="ECO:0007669"/>
    <property type="project" value="InterPro"/>
</dbReference>
<dbReference type="GO" id="GO:0046872">
    <property type="term" value="F:metal ion binding"/>
    <property type="evidence" value="ECO:0007669"/>
    <property type="project" value="TreeGrafter"/>
</dbReference>
<dbReference type="GO" id="GO:0044183">
    <property type="term" value="F:protein folding chaperone"/>
    <property type="evidence" value="ECO:0007669"/>
    <property type="project" value="InterPro"/>
</dbReference>
<dbReference type="GO" id="GO:0051087">
    <property type="term" value="F:protein-folding chaperone binding"/>
    <property type="evidence" value="ECO:0007669"/>
    <property type="project" value="TreeGrafter"/>
</dbReference>
<dbReference type="GO" id="GO:0051082">
    <property type="term" value="F:unfolded protein binding"/>
    <property type="evidence" value="ECO:0007669"/>
    <property type="project" value="TreeGrafter"/>
</dbReference>
<dbReference type="GO" id="GO:0051085">
    <property type="term" value="P:chaperone cofactor-dependent protein refolding"/>
    <property type="evidence" value="ECO:0007669"/>
    <property type="project" value="TreeGrafter"/>
</dbReference>
<dbReference type="CDD" id="cd00320">
    <property type="entry name" value="cpn10"/>
    <property type="match status" value="1"/>
</dbReference>
<dbReference type="FunFam" id="2.30.33.40:FF:000001">
    <property type="entry name" value="10 kDa chaperonin"/>
    <property type="match status" value="1"/>
</dbReference>
<dbReference type="Gene3D" id="2.30.33.40">
    <property type="entry name" value="GroES chaperonin"/>
    <property type="match status" value="1"/>
</dbReference>
<dbReference type="HAMAP" id="MF_00580">
    <property type="entry name" value="CH10"/>
    <property type="match status" value="1"/>
</dbReference>
<dbReference type="InterPro" id="IPR020818">
    <property type="entry name" value="Chaperonin_GroES"/>
</dbReference>
<dbReference type="InterPro" id="IPR037124">
    <property type="entry name" value="Chaperonin_GroES_sf"/>
</dbReference>
<dbReference type="InterPro" id="IPR018369">
    <property type="entry name" value="Chaprnonin_Cpn10_CS"/>
</dbReference>
<dbReference type="InterPro" id="IPR011032">
    <property type="entry name" value="GroES-like_sf"/>
</dbReference>
<dbReference type="NCBIfam" id="NF001527">
    <property type="entry name" value="PRK00364.1-2"/>
    <property type="match status" value="1"/>
</dbReference>
<dbReference type="NCBIfam" id="NF001531">
    <property type="entry name" value="PRK00364.2-2"/>
    <property type="match status" value="1"/>
</dbReference>
<dbReference type="NCBIfam" id="NF001533">
    <property type="entry name" value="PRK00364.2-4"/>
    <property type="match status" value="1"/>
</dbReference>
<dbReference type="PANTHER" id="PTHR10772">
    <property type="entry name" value="10 KDA HEAT SHOCK PROTEIN"/>
    <property type="match status" value="1"/>
</dbReference>
<dbReference type="PANTHER" id="PTHR10772:SF58">
    <property type="entry name" value="CO-CHAPERONIN GROES"/>
    <property type="match status" value="1"/>
</dbReference>
<dbReference type="Pfam" id="PF00166">
    <property type="entry name" value="Cpn10"/>
    <property type="match status" value="1"/>
</dbReference>
<dbReference type="PRINTS" id="PR00297">
    <property type="entry name" value="CHAPERONIN10"/>
</dbReference>
<dbReference type="SMART" id="SM00883">
    <property type="entry name" value="Cpn10"/>
    <property type="match status" value="1"/>
</dbReference>
<dbReference type="SUPFAM" id="SSF50129">
    <property type="entry name" value="GroES-like"/>
    <property type="match status" value="1"/>
</dbReference>
<dbReference type="PROSITE" id="PS00681">
    <property type="entry name" value="CHAPERONINS_CPN10"/>
    <property type="match status" value="1"/>
</dbReference>
<gene>
    <name evidence="1" type="primary">groES</name>
    <name evidence="1" type="synonym">groS</name>
    <name type="ordered locus">FTA_1817</name>
</gene>
<reference key="1">
    <citation type="journal article" date="2009" name="PLoS ONE">
        <title>Complete genome sequence of Francisella tularensis subspecies holarctica FTNF002-00.</title>
        <authorList>
            <person name="Barabote R.D."/>
            <person name="Xie G."/>
            <person name="Brettin T.S."/>
            <person name="Hinrichs S.H."/>
            <person name="Fey P.D."/>
            <person name="Jay J.J."/>
            <person name="Engle J.L."/>
            <person name="Godbole S.D."/>
            <person name="Noronha J.M."/>
            <person name="Scheuermann R.H."/>
            <person name="Zhou L.W."/>
            <person name="Lion C."/>
            <person name="Dempsey M.P."/>
        </authorList>
    </citation>
    <scope>NUCLEOTIDE SEQUENCE [LARGE SCALE GENOMIC DNA]</scope>
    <source>
        <strain>FTNF002-00 / FTA</strain>
    </source>
</reference>
<accession>A7NE89</accession>
<organism>
    <name type="scientific">Francisella tularensis subsp. holarctica (strain FTNF002-00 / FTA)</name>
    <dbReference type="NCBI Taxonomy" id="458234"/>
    <lineage>
        <taxon>Bacteria</taxon>
        <taxon>Pseudomonadati</taxon>
        <taxon>Pseudomonadota</taxon>
        <taxon>Gammaproteobacteria</taxon>
        <taxon>Thiotrichales</taxon>
        <taxon>Francisellaceae</taxon>
        <taxon>Francisella</taxon>
    </lineage>
</organism>
<evidence type="ECO:0000255" key="1">
    <source>
        <dbReference type="HAMAP-Rule" id="MF_00580"/>
    </source>
</evidence>